<feature type="chain" id="PRO_0000190523" description="4-hydroxy-3-methylbut-2-en-1-yl diphosphate synthase (flavodoxin)">
    <location>
        <begin position="1"/>
        <end position="422"/>
    </location>
</feature>
<feature type="binding site" evidence="1">
    <location>
        <position position="316"/>
    </location>
    <ligand>
        <name>[4Fe-4S] cluster</name>
        <dbReference type="ChEBI" id="CHEBI:49883"/>
    </ligand>
</feature>
<feature type="binding site" evidence="1">
    <location>
        <position position="319"/>
    </location>
    <ligand>
        <name>[4Fe-4S] cluster</name>
        <dbReference type="ChEBI" id="CHEBI:49883"/>
    </ligand>
</feature>
<feature type="binding site" evidence="1">
    <location>
        <position position="362"/>
    </location>
    <ligand>
        <name>[4Fe-4S] cluster</name>
        <dbReference type="ChEBI" id="CHEBI:49883"/>
    </ligand>
</feature>
<feature type="binding site" evidence="1">
    <location>
        <position position="369"/>
    </location>
    <ligand>
        <name>[4Fe-4S] cluster</name>
        <dbReference type="ChEBI" id="CHEBI:49883"/>
    </ligand>
</feature>
<sequence>MVGCRAASDAAEFESVVGSSRVARVSCAVRVGRVIIGGGSPVVVQSMALGGSGSLSSDLEEILCLAKEGSELIRVAINSEESIKSIPRIVEHLVSHGFDEKMVVGCGQYEVADLLNKYPDDAAFLGKIRINPGNVGFGDKRDRNFESVIEYAIKHDIPVRIGVNWGSLDKALIGKLMDDNASLASPYPDNVVMRKALVTSALQSAELAERIGLPRNKIVLSCKTSKVRDLVAVYSALSESADYALHLGLTEAGTGLKGIVSSTAGIAHLLLMGIGDTIRVSLTSTSREDRAQEVRVCKEILQSLGLRFFSAQTTSCPGCGRTNFPYFQKLVSGVNHYIDRRMQVWKVSNPGVVNMTVAVMGCVVNGPGESKHANLGISLPGNGEREVAAVYEDGRKLCTLHGENVLGEFLEIVESYVHRKYG</sequence>
<accession>Q5PAJ1</accession>
<name>ISPG_ANAMM</name>
<reference key="1">
    <citation type="journal article" date="2005" name="Proc. Natl. Acad. Sci. U.S.A.">
        <title>Complete genome sequencing of Anaplasma marginale reveals that the surface is skewed to two superfamilies of outer membrane proteins.</title>
        <authorList>
            <person name="Brayton K.A."/>
            <person name="Kappmeyer L.S."/>
            <person name="Herndon D.R."/>
            <person name="Dark M.J."/>
            <person name="Tibbals D.L."/>
            <person name="Palmer G.H."/>
            <person name="McGuire T.C."/>
            <person name="Knowles D.P. Jr."/>
        </authorList>
    </citation>
    <scope>NUCLEOTIDE SEQUENCE [LARGE SCALE GENOMIC DNA]</scope>
    <source>
        <strain>St. Maries</strain>
    </source>
</reference>
<dbReference type="EC" id="1.17.7.3" evidence="1"/>
<dbReference type="EMBL" id="CP000030">
    <property type="protein sequence ID" value="AAV86689.1"/>
    <property type="molecule type" value="Genomic_DNA"/>
</dbReference>
<dbReference type="RefSeq" id="WP_010267785.1">
    <property type="nucleotide sequence ID" value="NZ_AFMU01000011.1"/>
</dbReference>
<dbReference type="SMR" id="Q5PAJ1"/>
<dbReference type="GeneID" id="7398161"/>
<dbReference type="KEGG" id="ama:AM741"/>
<dbReference type="PATRIC" id="fig|320483.3.peg.639"/>
<dbReference type="HOGENOM" id="CLU_042258_1_0_5"/>
<dbReference type="UniPathway" id="UPA00056">
    <property type="reaction ID" value="UER00096"/>
</dbReference>
<dbReference type="GO" id="GO:0051539">
    <property type="term" value="F:4 iron, 4 sulfur cluster binding"/>
    <property type="evidence" value="ECO:0007669"/>
    <property type="project" value="UniProtKB-UniRule"/>
</dbReference>
<dbReference type="GO" id="GO:0046429">
    <property type="term" value="F:4-hydroxy-3-methylbut-2-en-1-yl diphosphate synthase activity (ferredoxin)"/>
    <property type="evidence" value="ECO:0007669"/>
    <property type="project" value="UniProtKB-UniRule"/>
</dbReference>
<dbReference type="GO" id="GO:0141197">
    <property type="term" value="F:4-hydroxy-3-methylbut-2-enyl-diphosphate synthase activity (flavodoxin)"/>
    <property type="evidence" value="ECO:0007669"/>
    <property type="project" value="UniProtKB-EC"/>
</dbReference>
<dbReference type="GO" id="GO:0005506">
    <property type="term" value="F:iron ion binding"/>
    <property type="evidence" value="ECO:0007669"/>
    <property type="project" value="InterPro"/>
</dbReference>
<dbReference type="GO" id="GO:0019288">
    <property type="term" value="P:isopentenyl diphosphate biosynthetic process, methylerythritol 4-phosphate pathway"/>
    <property type="evidence" value="ECO:0007669"/>
    <property type="project" value="UniProtKB-UniRule"/>
</dbReference>
<dbReference type="GO" id="GO:0016114">
    <property type="term" value="P:terpenoid biosynthetic process"/>
    <property type="evidence" value="ECO:0007669"/>
    <property type="project" value="InterPro"/>
</dbReference>
<dbReference type="FunFam" id="3.30.413.10:FF:000012">
    <property type="entry name" value="4-hydroxy-3-methylbut-2-en-1-yl diphosphate synthase (flavodoxin)"/>
    <property type="match status" value="1"/>
</dbReference>
<dbReference type="Gene3D" id="3.20.20.20">
    <property type="entry name" value="Dihydropteroate synthase-like"/>
    <property type="match status" value="1"/>
</dbReference>
<dbReference type="Gene3D" id="3.30.413.10">
    <property type="entry name" value="Sulfite Reductase Hemoprotein, domain 1"/>
    <property type="match status" value="1"/>
</dbReference>
<dbReference type="HAMAP" id="MF_00159">
    <property type="entry name" value="IspG"/>
    <property type="match status" value="1"/>
</dbReference>
<dbReference type="InterPro" id="IPR011005">
    <property type="entry name" value="Dihydropteroate_synth-like_sf"/>
</dbReference>
<dbReference type="InterPro" id="IPR016425">
    <property type="entry name" value="IspG_bac"/>
</dbReference>
<dbReference type="InterPro" id="IPR004588">
    <property type="entry name" value="IspG_bac-typ"/>
</dbReference>
<dbReference type="InterPro" id="IPR045854">
    <property type="entry name" value="NO2/SO3_Rdtase_4Fe4S_sf"/>
</dbReference>
<dbReference type="NCBIfam" id="TIGR00612">
    <property type="entry name" value="ispG_gcpE"/>
    <property type="match status" value="1"/>
</dbReference>
<dbReference type="NCBIfam" id="NF001540">
    <property type="entry name" value="PRK00366.1"/>
    <property type="match status" value="1"/>
</dbReference>
<dbReference type="PANTHER" id="PTHR30454">
    <property type="entry name" value="4-HYDROXY-3-METHYLBUT-2-EN-1-YL DIPHOSPHATE SYNTHASE"/>
    <property type="match status" value="1"/>
</dbReference>
<dbReference type="PANTHER" id="PTHR30454:SF0">
    <property type="entry name" value="4-HYDROXY-3-METHYLBUT-2-EN-1-YL DIPHOSPHATE SYNTHASE (FERREDOXIN), CHLOROPLASTIC"/>
    <property type="match status" value="1"/>
</dbReference>
<dbReference type="Pfam" id="PF04551">
    <property type="entry name" value="GcpE"/>
    <property type="match status" value="1"/>
</dbReference>
<dbReference type="PIRSF" id="PIRSF004640">
    <property type="entry name" value="IspG"/>
    <property type="match status" value="1"/>
</dbReference>
<organism>
    <name type="scientific">Anaplasma marginale (strain St. Maries)</name>
    <dbReference type="NCBI Taxonomy" id="234826"/>
    <lineage>
        <taxon>Bacteria</taxon>
        <taxon>Pseudomonadati</taxon>
        <taxon>Pseudomonadota</taxon>
        <taxon>Alphaproteobacteria</taxon>
        <taxon>Rickettsiales</taxon>
        <taxon>Anaplasmataceae</taxon>
        <taxon>Anaplasma</taxon>
    </lineage>
</organism>
<proteinExistence type="inferred from homology"/>
<comment type="function">
    <text evidence="1">Converts 2C-methyl-D-erythritol 2,4-cyclodiphosphate (ME-2,4cPP) into 1-hydroxy-2-methyl-2-(E)-butenyl 4-diphosphate.</text>
</comment>
<comment type="catalytic activity">
    <reaction evidence="1">
        <text>(2E)-4-hydroxy-3-methylbut-2-enyl diphosphate + oxidized [flavodoxin] + H2O + 2 H(+) = 2-C-methyl-D-erythritol 2,4-cyclic diphosphate + reduced [flavodoxin]</text>
        <dbReference type="Rhea" id="RHEA:43604"/>
        <dbReference type="Rhea" id="RHEA-COMP:10622"/>
        <dbReference type="Rhea" id="RHEA-COMP:10623"/>
        <dbReference type="ChEBI" id="CHEBI:15377"/>
        <dbReference type="ChEBI" id="CHEBI:15378"/>
        <dbReference type="ChEBI" id="CHEBI:57618"/>
        <dbReference type="ChEBI" id="CHEBI:58210"/>
        <dbReference type="ChEBI" id="CHEBI:58483"/>
        <dbReference type="ChEBI" id="CHEBI:128753"/>
        <dbReference type="EC" id="1.17.7.3"/>
    </reaction>
</comment>
<comment type="cofactor">
    <cofactor evidence="1">
        <name>[4Fe-4S] cluster</name>
        <dbReference type="ChEBI" id="CHEBI:49883"/>
    </cofactor>
    <text evidence="1">Binds 1 [4Fe-4S] cluster.</text>
</comment>
<comment type="pathway">
    <text evidence="1">Isoprenoid biosynthesis; isopentenyl diphosphate biosynthesis via DXP pathway; isopentenyl diphosphate from 1-deoxy-D-xylulose 5-phosphate: step 5/6.</text>
</comment>
<comment type="similarity">
    <text evidence="1">Belongs to the IspG family.</text>
</comment>
<evidence type="ECO:0000255" key="1">
    <source>
        <dbReference type="HAMAP-Rule" id="MF_00159"/>
    </source>
</evidence>
<protein>
    <recommendedName>
        <fullName evidence="1">4-hydroxy-3-methylbut-2-en-1-yl diphosphate synthase (flavodoxin)</fullName>
        <ecNumber evidence="1">1.17.7.3</ecNumber>
    </recommendedName>
    <alternativeName>
        <fullName evidence="1">1-hydroxy-2-methyl-2-(E)-butenyl 4-diphosphate synthase</fullName>
    </alternativeName>
</protein>
<gene>
    <name evidence="1" type="primary">ispG</name>
    <name type="synonym">gcpE</name>
    <name type="ordered locus">AM741</name>
</gene>
<keyword id="KW-0004">4Fe-4S</keyword>
<keyword id="KW-0408">Iron</keyword>
<keyword id="KW-0411">Iron-sulfur</keyword>
<keyword id="KW-0414">Isoprene biosynthesis</keyword>
<keyword id="KW-0479">Metal-binding</keyword>
<keyword id="KW-0560">Oxidoreductase</keyword>